<keyword id="KW-1185">Reference proteome</keyword>
<keyword id="KW-0687">Ribonucleoprotein</keyword>
<keyword id="KW-0689">Ribosomal protein</keyword>
<keyword id="KW-0694">RNA-binding</keyword>
<keyword id="KW-0699">rRNA-binding</keyword>
<organism>
    <name type="scientific">Macrococcus caseolyticus (strain JCSC5402)</name>
    <name type="common">Macrococcoides caseolyticum</name>
    <dbReference type="NCBI Taxonomy" id="458233"/>
    <lineage>
        <taxon>Bacteria</taxon>
        <taxon>Bacillati</taxon>
        <taxon>Bacillota</taxon>
        <taxon>Bacilli</taxon>
        <taxon>Bacillales</taxon>
        <taxon>Staphylococcaceae</taxon>
        <taxon>Macrococcoides</taxon>
    </lineage>
</organism>
<comment type="function">
    <text evidence="1">This protein binds specifically to 23S rRNA; its binding is stimulated by other ribosomal proteins, e.g. L4, L17, and L20. It is important during the early stages of 50S assembly. It makes multiple contacts with different domains of the 23S rRNA in the assembled 50S subunit and ribosome (By similarity).</text>
</comment>
<comment type="function">
    <text evidence="1">The globular domain of the protein is located near the polypeptide exit tunnel on the outside of the subunit, while an extended beta-hairpin is found that lines the wall of the exit tunnel in the center of the 70S ribosome.</text>
</comment>
<comment type="subunit">
    <text evidence="1">Part of the 50S ribosomal subunit.</text>
</comment>
<comment type="similarity">
    <text evidence="1">Belongs to the universal ribosomal protein uL22 family.</text>
</comment>
<feature type="chain" id="PRO_1000166069" description="Large ribosomal subunit protein uL22">
    <location>
        <begin position="1"/>
        <end position="124"/>
    </location>
</feature>
<proteinExistence type="inferred from homology"/>
<reference key="1">
    <citation type="journal article" date="2009" name="J. Bacteriol.">
        <title>Complete genome sequence of Macrococcus caseolyticus strain JCSCS5402, reflecting the ancestral genome of the human-pathogenic staphylococci.</title>
        <authorList>
            <person name="Baba T."/>
            <person name="Kuwahara-Arai K."/>
            <person name="Uchiyama I."/>
            <person name="Takeuchi F."/>
            <person name="Ito T."/>
            <person name="Hiramatsu K."/>
        </authorList>
    </citation>
    <scope>NUCLEOTIDE SEQUENCE [LARGE SCALE GENOMIC DNA]</scope>
    <source>
        <strain>JCSC5402</strain>
    </source>
</reference>
<sequence length="124" mass="13663">MEAKAVARTIRIAPRKVRLVLDLIRGKEVAEAIAILKLTNKASSPVVEKLLMSALANAEHNYDMNIDSLVVKEAYANEGPTLKRFRPRAQGRASAINKRTSHITIVVADKEVKTSNTEAQEEAK</sequence>
<name>RL22_MACCJ</name>
<gene>
    <name evidence="1" type="primary">rplV</name>
    <name type="ordered locus">MCCL_0200</name>
</gene>
<protein>
    <recommendedName>
        <fullName evidence="1">Large ribosomal subunit protein uL22</fullName>
    </recommendedName>
    <alternativeName>
        <fullName evidence="2">50S ribosomal protein L22</fullName>
    </alternativeName>
</protein>
<dbReference type="EMBL" id="AP009484">
    <property type="protein sequence ID" value="BAH16907.1"/>
    <property type="molecule type" value="Genomic_DNA"/>
</dbReference>
<dbReference type="RefSeq" id="WP_012656111.1">
    <property type="nucleotide sequence ID" value="NC_011999.1"/>
</dbReference>
<dbReference type="SMR" id="B9E9J6"/>
<dbReference type="STRING" id="458233.MCCL_0200"/>
<dbReference type="GeneID" id="61130622"/>
<dbReference type="KEGG" id="mcl:MCCL_0200"/>
<dbReference type="eggNOG" id="COG0091">
    <property type="taxonomic scope" value="Bacteria"/>
</dbReference>
<dbReference type="HOGENOM" id="CLU_083987_3_3_9"/>
<dbReference type="OrthoDB" id="9805969at2"/>
<dbReference type="Proteomes" id="UP000001383">
    <property type="component" value="Chromosome"/>
</dbReference>
<dbReference type="GO" id="GO:0022625">
    <property type="term" value="C:cytosolic large ribosomal subunit"/>
    <property type="evidence" value="ECO:0007669"/>
    <property type="project" value="TreeGrafter"/>
</dbReference>
<dbReference type="GO" id="GO:0019843">
    <property type="term" value="F:rRNA binding"/>
    <property type="evidence" value="ECO:0007669"/>
    <property type="project" value="UniProtKB-UniRule"/>
</dbReference>
<dbReference type="GO" id="GO:0003735">
    <property type="term" value="F:structural constituent of ribosome"/>
    <property type="evidence" value="ECO:0007669"/>
    <property type="project" value="InterPro"/>
</dbReference>
<dbReference type="GO" id="GO:0006412">
    <property type="term" value="P:translation"/>
    <property type="evidence" value="ECO:0007669"/>
    <property type="project" value="UniProtKB-UniRule"/>
</dbReference>
<dbReference type="CDD" id="cd00336">
    <property type="entry name" value="Ribosomal_L22"/>
    <property type="match status" value="1"/>
</dbReference>
<dbReference type="FunFam" id="3.90.470.10:FF:000001">
    <property type="entry name" value="50S ribosomal protein L22"/>
    <property type="match status" value="1"/>
</dbReference>
<dbReference type="Gene3D" id="3.90.470.10">
    <property type="entry name" value="Ribosomal protein L22/L17"/>
    <property type="match status" value="1"/>
</dbReference>
<dbReference type="HAMAP" id="MF_01331_B">
    <property type="entry name" value="Ribosomal_uL22_B"/>
    <property type="match status" value="1"/>
</dbReference>
<dbReference type="InterPro" id="IPR001063">
    <property type="entry name" value="Ribosomal_uL22"/>
</dbReference>
<dbReference type="InterPro" id="IPR005727">
    <property type="entry name" value="Ribosomal_uL22_bac/chlpt-type"/>
</dbReference>
<dbReference type="InterPro" id="IPR047867">
    <property type="entry name" value="Ribosomal_uL22_bac/org-type"/>
</dbReference>
<dbReference type="InterPro" id="IPR018260">
    <property type="entry name" value="Ribosomal_uL22_CS"/>
</dbReference>
<dbReference type="InterPro" id="IPR036394">
    <property type="entry name" value="Ribosomal_uL22_sf"/>
</dbReference>
<dbReference type="NCBIfam" id="TIGR01044">
    <property type="entry name" value="rplV_bact"/>
    <property type="match status" value="1"/>
</dbReference>
<dbReference type="PANTHER" id="PTHR13501">
    <property type="entry name" value="CHLOROPLAST 50S RIBOSOMAL PROTEIN L22-RELATED"/>
    <property type="match status" value="1"/>
</dbReference>
<dbReference type="PANTHER" id="PTHR13501:SF8">
    <property type="entry name" value="LARGE RIBOSOMAL SUBUNIT PROTEIN UL22M"/>
    <property type="match status" value="1"/>
</dbReference>
<dbReference type="Pfam" id="PF00237">
    <property type="entry name" value="Ribosomal_L22"/>
    <property type="match status" value="1"/>
</dbReference>
<dbReference type="SUPFAM" id="SSF54843">
    <property type="entry name" value="Ribosomal protein L22"/>
    <property type="match status" value="1"/>
</dbReference>
<dbReference type="PROSITE" id="PS00464">
    <property type="entry name" value="RIBOSOMAL_L22"/>
    <property type="match status" value="1"/>
</dbReference>
<evidence type="ECO:0000255" key="1">
    <source>
        <dbReference type="HAMAP-Rule" id="MF_01331"/>
    </source>
</evidence>
<evidence type="ECO:0000305" key="2"/>
<accession>B9E9J6</accession>